<name>PURA_SYNE7</name>
<accession>Q31KI0</accession>
<sequence length="444" mass="48301">MANVVVIGAQWGDEGKGKITDLLSRSADVVVRYQGGVNAGHTVVVGEQTLKLHLIPSGILYPDTQCIIGSGTVIDPKVLLGEVEMLEQLGISTDHLLISQTAHVTMPYHRLIDQASEQQRGSHKIGTTGRGIGPTYADKSERTGIRILDLMDPEGLREQLTWTIAQKNVILDKLYGLPPLDAESVIEEYSGYAERLRPHVVDSSLTIDEAWRKRKNILFEGAQGTLLDLDHGTYPYVTSSNPVAGGACIGAGVGPTIIDRVIGVAKAYTTRVGEGPFPTELHGDIGELLCQRGAEFGTTTGRRRRCGWFDAVIGRYAVRINGIDCLAITKLDVLDDLDEIQVCVAYDIDGERCDHFPSSARSFANCQPIYKTVPGWKQSTSHCRNLEDLPKAALDYLKFLAELMEVPIAIVSLGASRDQTIIVEDPIHGPKRALLYTNGDSSAS</sequence>
<feature type="chain" id="PRO_1000000937" description="Adenylosuccinate synthetase">
    <location>
        <begin position="1"/>
        <end position="444"/>
    </location>
</feature>
<feature type="active site" description="Proton acceptor" evidence="1">
    <location>
        <position position="13"/>
    </location>
</feature>
<feature type="active site" description="Proton donor" evidence="1">
    <location>
        <position position="41"/>
    </location>
</feature>
<feature type="binding site" evidence="1">
    <location>
        <begin position="12"/>
        <end position="18"/>
    </location>
    <ligand>
        <name>GTP</name>
        <dbReference type="ChEBI" id="CHEBI:37565"/>
    </ligand>
</feature>
<feature type="binding site" description="in other chain" evidence="1">
    <location>
        <begin position="13"/>
        <end position="16"/>
    </location>
    <ligand>
        <name>IMP</name>
        <dbReference type="ChEBI" id="CHEBI:58053"/>
        <note>ligand shared between dimeric partners</note>
    </ligand>
</feature>
<feature type="binding site" evidence="1">
    <location>
        <position position="13"/>
    </location>
    <ligand>
        <name>Mg(2+)</name>
        <dbReference type="ChEBI" id="CHEBI:18420"/>
    </ligand>
</feature>
<feature type="binding site" description="in other chain" evidence="1">
    <location>
        <begin position="38"/>
        <end position="41"/>
    </location>
    <ligand>
        <name>IMP</name>
        <dbReference type="ChEBI" id="CHEBI:58053"/>
        <note>ligand shared between dimeric partners</note>
    </ligand>
</feature>
<feature type="binding site" evidence="1">
    <location>
        <begin position="40"/>
        <end position="42"/>
    </location>
    <ligand>
        <name>GTP</name>
        <dbReference type="ChEBI" id="CHEBI:37565"/>
    </ligand>
</feature>
<feature type="binding site" evidence="1">
    <location>
        <position position="40"/>
    </location>
    <ligand>
        <name>Mg(2+)</name>
        <dbReference type="ChEBI" id="CHEBI:18420"/>
    </ligand>
</feature>
<feature type="binding site" description="in other chain" evidence="1">
    <location>
        <position position="128"/>
    </location>
    <ligand>
        <name>IMP</name>
        <dbReference type="ChEBI" id="CHEBI:58053"/>
        <note>ligand shared between dimeric partners</note>
    </ligand>
</feature>
<feature type="binding site" evidence="1">
    <location>
        <position position="142"/>
    </location>
    <ligand>
        <name>IMP</name>
        <dbReference type="ChEBI" id="CHEBI:58053"/>
        <note>ligand shared between dimeric partners</note>
    </ligand>
</feature>
<feature type="binding site" description="in other chain" evidence="1">
    <location>
        <position position="223"/>
    </location>
    <ligand>
        <name>IMP</name>
        <dbReference type="ChEBI" id="CHEBI:58053"/>
        <note>ligand shared between dimeric partners</note>
    </ligand>
</feature>
<feature type="binding site" description="in other chain" evidence="1">
    <location>
        <position position="238"/>
    </location>
    <ligand>
        <name>IMP</name>
        <dbReference type="ChEBI" id="CHEBI:58053"/>
        <note>ligand shared between dimeric partners</note>
    </ligand>
</feature>
<feature type="binding site" evidence="1">
    <location>
        <begin position="298"/>
        <end position="304"/>
    </location>
    <ligand>
        <name>substrate</name>
    </ligand>
</feature>
<feature type="binding site" description="in other chain" evidence="1">
    <location>
        <position position="302"/>
    </location>
    <ligand>
        <name>IMP</name>
        <dbReference type="ChEBI" id="CHEBI:58053"/>
        <note>ligand shared between dimeric partners</note>
    </ligand>
</feature>
<feature type="binding site" evidence="1">
    <location>
        <position position="304"/>
    </location>
    <ligand>
        <name>GTP</name>
        <dbReference type="ChEBI" id="CHEBI:37565"/>
    </ligand>
</feature>
<feature type="binding site" evidence="1">
    <location>
        <begin position="330"/>
        <end position="332"/>
    </location>
    <ligand>
        <name>GTP</name>
        <dbReference type="ChEBI" id="CHEBI:37565"/>
    </ligand>
</feature>
<feature type="binding site" evidence="1">
    <location>
        <begin position="412"/>
        <end position="414"/>
    </location>
    <ligand>
        <name>GTP</name>
        <dbReference type="ChEBI" id="CHEBI:37565"/>
    </ligand>
</feature>
<comment type="function">
    <text evidence="1">Plays an important role in the de novo pathway of purine nucleotide biosynthesis. Catalyzes the first committed step in the biosynthesis of AMP from IMP.</text>
</comment>
<comment type="catalytic activity">
    <reaction evidence="1">
        <text>IMP + L-aspartate + GTP = N(6)-(1,2-dicarboxyethyl)-AMP + GDP + phosphate + 2 H(+)</text>
        <dbReference type="Rhea" id="RHEA:15753"/>
        <dbReference type="ChEBI" id="CHEBI:15378"/>
        <dbReference type="ChEBI" id="CHEBI:29991"/>
        <dbReference type="ChEBI" id="CHEBI:37565"/>
        <dbReference type="ChEBI" id="CHEBI:43474"/>
        <dbReference type="ChEBI" id="CHEBI:57567"/>
        <dbReference type="ChEBI" id="CHEBI:58053"/>
        <dbReference type="ChEBI" id="CHEBI:58189"/>
        <dbReference type="EC" id="6.3.4.4"/>
    </reaction>
</comment>
<comment type="cofactor">
    <cofactor evidence="1">
        <name>Mg(2+)</name>
        <dbReference type="ChEBI" id="CHEBI:18420"/>
    </cofactor>
    <text evidence="1">Binds 1 Mg(2+) ion per subunit.</text>
</comment>
<comment type="pathway">
    <text evidence="1">Purine metabolism; AMP biosynthesis via de novo pathway; AMP from IMP: step 1/2.</text>
</comment>
<comment type="subunit">
    <text evidence="1">Homodimer.</text>
</comment>
<comment type="subcellular location">
    <subcellularLocation>
        <location evidence="1">Cytoplasm</location>
    </subcellularLocation>
</comment>
<comment type="similarity">
    <text evidence="1">Belongs to the adenylosuccinate synthetase family.</text>
</comment>
<protein>
    <recommendedName>
        <fullName evidence="1">Adenylosuccinate synthetase</fullName>
        <shortName evidence="1">AMPSase</shortName>
        <shortName evidence="1">AdSS</shortName>
        <ecNumber evidence="1">6.3.4.4</ecNumber>
    </recommendedName>
    <alternativeName>
        <fullName evidence="1">IMP--aspartate ligase</fullName>
    </alternativeName>
</protein>
<evidence type="ECO:0000255" key="1">
    <source>
        <dbReference type="HAMAP-Rule" id="MF_00011"/>
    </source>
</evidence>
<keyword id="KW-0963">Cytoplasm</keyword>
<keyword id="KW-0342">GTP-binding</keyword>
<keyword id="KW-0436">Ligase</keyword>
<keyword id="KW-0460">Magnesium</keyword>
<keyword id="KW-0479">Metal-binding</keyword>
<keyword id="KW-0547">Nucleotide-binding</keyword>
<keyword id="KW-0658">Purine biosynthesis</keyword>
<keyword id="KW-1185">Reference proteome</keyword>
<organism>
    <name type="scientific">Synechococcus elongatus (strain ATCC 33912 / PCC 7942 / FACHB-805)</name>
    <name type="common">Anacystis nidulans R2</name>
    <dbReference type="NCBI Taxonomy" id="1140"/>
    <lineage>
        <taxon>Bacteria</taxon>
        <taxon>Bacillati</taxon>
        <taxon>Cyanobacteriota</taxon>
        <taxon>Cyanophyceae</taxon>
        <taxon>Synechococcales</taxon>
        <taxon>Synechococcaceae</taxon>
        <taxon>Synechococcus</taxon>
    </lineage>
</organism>
<gene>
    <name evidence="1" type="primary">purA</name>
    <name type="ordered locus">Synpcc7942_2409</name>
</gene>
<proteinExistence type="inferred from homology"/>
<reference key="1">
    <citation type="submission" date="2005-08" db="EMBL/GenBank/DDBJ databases">
        <title>Complete sequence of chromosome 1 of Synechococcus elongatus PCC 7942.</title>
        <authorList>
            <consortium name="US DOE Joint Genome Institute"/>
            <person name="Copeland A."/>
            <person name="Lucas S."/>
            <person name="Lapidus A."/>
            <person name="Barry K."/>
            <person name="Detter J.C."/>
            <person name="Glavina T."/>
            <person name="Hammon N."/>
            <person name="Israni S."/>
            <person name="Pitluck S."/>
            <person name="Schmutz J."/>
            <person name="Larimer F."/>
            <person name="Land M."/>
            <person name="Kyrpides N."/>
            <person name="Lykidis A."/>
            <person name="Golden S."/>
            <person name="Richardson P."/>
        </authorList>
    </citation>
    <scope>NUCLEOTIDE SEQUENCE [LARGE SCALE GENOMIC DNA]</scope>
    <source>
        <strain>ATCC 33912 / PCC 7942 / FACHB-805</strain>
    </source>
</reference>
<dbReference type="EC" id="6.3.4.4" evidence="1"/>
<dbReference type="EMBL" id="CP000100">
    <property type="protein sequence ID" value="ABB58439.1"/>
    <property type="molecule type" value="Genomic_DNA"/>
</dbReference>
<dbReference type="RefSeq" id="WP_011378451.1">
    <property type="nucleotide sequence ID" value="NZ_JACJTX010000001.1"/>
</dbReference>
<dbReference type="SMR" id="Q31KI0"/>
<dbReference type="STRING" id="1140.Synpcc7942_2409"/>
<dbReference type="PaxDb" id="1140-Synpcc7942_2409"/>
<dbReference type="KEGG" id="syf:Synpcc7942_2409"/>
<dbReference type="eggNOG" id="COG0104">
    <property type="taxonomic scope" value="Bacteria"/>
</dbReference>
<dbReference type="HOGENOM" id="CLU_029848_0_0_3"/>
<dbReference type="OrthoDB" id="9807553at2"/>
<dbReference type="BioCyc" id="SYNEL:SYNPCC7942_2409-MONOMER"/>
<dbReference type="UniPathway" id="UPA00075">
    <property type="reaction ID" value="UER00335"/>
</dbReference>
<dbReference type="Proteomes" id="UP000889800">
    <property type="component" value="Chromosome"/>
</dbReference>
<dbReference type="GO" id="GO:0005737">
    <property type="term" value="C:cytoplasm"/>
    <property type="evidence" value="ECO:0007669"/>
    <property type="project" value="UniProtKB-SubCell"/>
</dbReference>
<dbReference type="GO" id="GO:0004019">
    <property type="term" value="F:adenylosuccinate synthase activity"/>
    <property type="evidence" value="ECO:0007669"/>
    <property type="project" value="UniProtKB-UniRule"/>
</dbReference>
<dbReference type="GO" id="GO:0005525">
    <property type="term" value="F:GTP binding"/>
    <property type="evidence" value="ECO:0007669"/>
    <property type="project" value="UniProtKB-UniRule"/>
</dbReference>
<dbReference type="GO" id="GO:0000287">
    <property type="term" value="F:magnesium ion binding"/>
    <property type="evidence" value="ECO:0007669"/>
    <property type="project" value="UniProtKB-UniRule"/>
</dbReference>
<dbReference type="GO" id="GO:0044208">
    <property type="term" value="P:'de novo' AMP biosynthetic process"/>
    <property type="evidence" value="ECO:0007669"/>
    <property type="project" value="UniProtKB-UniRule"/>
</dbReference>
<dbReference type="GO" id="GO:0046040">
    <property type="term" value="P:IMP metabolic process"/>
    <property type="evidence" value="ECO:0007669"/>
    <property type="project" value="TreeGrafter"/>
</dbReference>
<dbReference type="CDD" id="cd03108">
    <property type="entry name" value="AdSS"/>
    <property type="match status" value="1"/>
</dbReference>
<dbReference type="FunFam" id="1.10.300.10:FF:000001">
    <property type="entry name" value="Adenylosuccinate synthetase"/>
    <property type="match status" value="1"/>
</dbReference>
<dbReference type="FunFam" id="3.90.170.10:FF:000001">
    <property type="entry name" value="Adenylosuccinate synthetase"/>
    <property type="match status" value="1"/>
</dbReference>
<dbReference type="Gene3D" id="3.40.440.10">
    <property type="entry name" value="Adenylosuccinate Synthetase, subunit A, domain 1"/>
    <property type="match status" value="1"/>
</dbReference>
<dbReference type="Gene3D" id="1.10.300.10">
    <property type="entry name" value="Adenylosuccinate Synthetase, subunit A, domain 2"/>
    <property type="match status" value="1"/>
</dbReference>
<dbReference type="Gene3D" id="3.90.170.10">
    <property type="entry name" value="Adenylosuccinate Synthetase, subunit A, domain 3"/>
    <property type="match status" value="1"/>
</dbReference>
<dbReference type="HAMAP" id="MF_00011">
    <property type="entry name" value="Adenylosucc_synth"/>
    <property type="match status" value="1"/>
</dbReference>
<dbReference type="InterPro" id="IPR018220">
    <property type="entry name" value="Adenylosuccin_syn_GTP-bd"/>
</dbReference>
<dbReference type="InterPro" id="IPR033128">
    <property type="entry name" value="Adenylosuccin_syn_Lys_AS"/>
</dbReference>
<dbReference type="InterPro" id="IPR042109">
    <property type="entry name" value="Adenylosuccinate_synth_dom1"/>
</dbReference>
<dbReference type="InterPro" id="IPR042110">
    <property type="entry name" value="Adenylosuccinate_synth_dom2"/>
</dbReference>
<dbReference type="InterPro" id="IPR042111">
    <property type="entry name" value="Adenylosuccinate_synth_dom3"/>
</dbReference>
<dbReference type="InterPro" id="IPR001114">
    <property type="entry name" value="Adenylosuccinate_synthetase"/>
</dbReference>
<dbReference type="InterPro" id="IPR027417">
    <property type="entry name" value="P-loop_NTPase"/>
</dbReference>
<dbReference type="NCBIfam" id="NF002223">
    <property type="entry name" value="PRK01117.1"/>
    <property type="match status" value="1"/>
</dbReference>
<dbReference type="NCBIfam" id="TIGR00184">
    <property type="entry name" value="purA"/>
    <property type="match status" value="1"/>
</dbReference>
<dbReference type="PANTHER" id="PTHR11846">
    <property type="entry name" value="ADENYLOSUCCINATE SYNTHETASE"/>
    <property type="match status" value="1"/>
</dbReference>
<dbReference type="PANTHER" id="PTHR11846:SF0">
    <property type="entry name" value="ADENYLOSUCCINATE SYNTHETASE"/>
    <property type="match status" value="1"/>
</dbReference>
<dbReference type="Pfam" id="PF00709">
    <property type="entry name" value="Adenylsucc_synt"/>
    <property type="match status" value="1"/>
</dbReference>
<dbReference type="SMART" id="SM00788">
    <property type="entry name" value="Adenylsucc_synt"/>
    <property type="match status" value="1"/>
</dbReference>
<dbReference type="SUPFAM" id="SSF52540">
    <property type="entry name" value="P-loop containing nucleoside triphosphate hydrolases"/>
    <property type="match status" value="1"/>
</dbReference>
<dbReference type="PROSITE" id="PS01266">
    <property type="entry name" value="ADENYLOSUCCIN_SYN_1"/>
    <property type="match status" value="1"/>
</dbReference>
<dbReference type="PROSITE" id="PS00513">
    <property type="entry name" value="ADENYLOSUCCIN_SYN_2"/>
    <property type="match status" value="1"/>
</dbReference>